<protein>
    <recommendedName>
        <fullName evidence="2">Elongation factor 1-alpha</fullName>
        <shortName evidence="2">EF-1-alpha</shortName>
        <ecNumber evidence="2">3.6.5.3</ecNumber>
    </recommendedName>
    <alternativeName>
        <fullName evidence="2">Elongation factor Tu</fullName>
        <shortName evidence="2">EF-Tu</shortName>
    </alternativeName>
</protein>
<dbReference type="EC" id="3.6.5.3" evidence="2"/>
<dbReference type="EMBL" id="AE017199">
    <property type="protein sequence ID" value="AAR38938.1"/>
    <property type="molecule type" value="Genomic_DNA"/>
</dbReference>
<dbReference type="SMR" id="Q74MI6"/>
<dbReference type="STRING" id="228908.NEQ082"/>
<dbReference type="EnsemblBacteria" id="AAR38938">
    <property type="protein sequence ID" value="AAR38938"/>
    <property type="gene ID" value="NEQ082"/>
</dbReference>
<dbReference type="KEGG" id="neq:NEQ082"/>
<dbReference type="PATRIC" id="fig|228908.8.peg.86"/>
<dbReference type="HOGENOM" id="CLU_007265_3_5_2"/>
<dbReference type="Proteomes" id="UP000000578">
    <property type="component" value="Chromosome"/>
</dbReference>
<dbReference type="GO" id="GO:0005737">
    <property type="term" value="C:cytoplasm"/>
    <property type="evidence" value="ECO:0007669"/>
    <property type="project" value="UniProtKB-SubCell"/>
</dbReference>
<dbReference type="GO" id="GO:0005525">
    <property type="term" value="F:GTP binding"/>
    <property type="evidence" value="ECO:0007669"/>
    <property type="project" value="UniProtKB-UniRule"/>
</dbReference>
<dbReference type="GO" id="GO:0003924">
    <property type="term" value="F:GTPase activity"/>
    <property type="evidence" value="ECO:0007669"/>
    <property type="project" value="InterPro"/>
</dbReference>
<dbReference type="GO" id="GO:0003746">
    <property type="term" value="F:translation elongation factor activity"/>
    <property type="evidence" value="ECO:0007669"/>
    <property type="project" value="UniProtKB-UniRule"/>
</dbReference>
<dbReference type="CDD" id="cd01883">
    <property type="entry name" value="EF1_alpha"/>
    <property type="match status" value="1"/>
</dbReference>
<dbReference type="CDD" id="cd03693">
    <property type="entry name" value="EF1_alpha_II"/>
    <property type="match status" value="1"/>
</dbReference>
<dbReference type="CDD" id="cd03705">
    <property type="entry name" value="EF1_alpha_III"/>
    <property type="match status" value="1"/>
</dbReference>
<dbReference type="FunFam" id="2.40.30.10:FF:000005">
    <property type="entry name" value="Elongation factor 1-alpha"/>
    <property type="match status" value="1"/>
</dbReference>
<dbReference type="Gene3D" id="3.40.50.300">
    <property type="entry name" value="P-loop containing nucleotide triphosphate hydrolases"/>
    <property type="match status" value="1"/>
</dbReference>
<dbReference type="Gene3D" id="2.40.30.10">
    <property type="entry name" value="Translation factors"/>
    <property type="match status" value="2"/>
</dbReference>
<dbReference type="HAMAP" id="MF_00118_A">
    <property type="entry name" value="EF_Tu_A"/>
    <property type="match status" value="1"/>
</dbReference>
<dbReference type="InterPro" id="IPR004161">
    <property type="entry name" value="EFTu-like_2"/>
</dbReference>
<dbReference type="InterPro" id="IPR031157">
    <property type="entry name" value="G_TR_CS"/>
</dbReference>
<dbReference type="InterPro" id="IPR054696">
    <property type="entry name" value="GTP-eEF1A_C"/>
</dbReference>
<dbReference type="InterPro" id="IPR027417">
    <property type="entry name" value="P-loop_NTPase"/>
</dbReference>
<dbReference type="InterPro" id="IPR005225">
    <property type="entry name" value="Small_GTP-bd"/>
</dbReference>
<dbReference type="InterPro" id="IPR000795">
    <property type="entry name" value="T_Tr_GTP-bd_dom"/>
</dbReference>
<dbReference type="InterPro" id="IPR050100">
    <property type="entry name" value="TRAFAC_GTPase_members"/>
</dbReference>
<dbReference type="InterPro" id="IPR009000">
    <property type="entry name" value="Transl_B-barrel_sf"/>
</dbReference>
<dbReference type="InterPro" id="IPR009001">
    <property type="entry name" value="Transl_elong_EF1A/Init_IF2_C"/>
</dbReference>
<dbReference type="InterPro" id="IPR004539">
    <property type="entry name" value="Transl_elong_EF1A_euk/arc"/>
</dbReference>
<dbReference type="NCBIfam" id="TIGR00483">
    <property type="entry name" value="EF-1_alpha"/>
    <property type="match status" value="1"/>
</dbReference>
<dbReference type="NCBIfam" id="NF008969">
    <property type="entry name" value="PRK12317.1"/>
    <property type="match status" value="1"/>
</dbReference>
<dbReference type="NCBIfam" id="TIGR00231">
    <property type="entry name" value="small_GTP"/>
    <property type="match status" value="1"/>
</dbReference>
<dbReference type="PANTHER" id="PTHR23115">
    <property type="entry name" value="TRANSLATION FACTOR"/>
    <property type="match status" value="1"/>
</dbReference>
<dbReference type="Pfam" id="PF22594">
    <property type="entry name" value="GTP-eEF1A_C"/>
    <property type="match status" value="1"/>
</dbReference>
<dbReference type="Pfam" id="PF00009">
    <property type="entry name" value="GTP_EFTU"/>
    <property type="match status" value="1"/>
</dbReference>
<dbReference type="Pfam" id="PF03144">
    <property type="entry name" value="GTP_EFTU_D2"/>
    <property type="match status" value="1"/>
</dbReference>
<dbReference type="PRINTS" id="PR00315">
    <property type="entry name" value="ELONGATNFCT"/>
</dbReference>
<dbReference type="SUPFAM" id="SSF50465">
    <property type="entry name" value="EF-Tu/eEF-1alpha/eIF2-gamma C-terminal domain"/>
    <property type="match status" value="1"/>
</dbReference>
<dbReference type="SUPFAM" id="SSF52540">
    <property type="entry name" value="P-loop containing nucleoside triphosphate hydrolases"/>
    <property type="match status" value="1"/>
</dbReference>
<dbReference type="SUPFAM" id="SSF50447">
    <property type="entry name" value="Translation proteins"/>
    <property type="match status" value="1"/>
</dbReference>
<dbReference type="PROSITE" id="PS00301">
    <property type="entry name" value="G_TR_1"/>
    <property type="match status" value="1"/>
</dbReference>
<dbReference type="PROSITE" id="PS51722">
    <property type="entry name" value="G_TR_2"/>
    <property type="match status" value="1"/>
</dbReference>
<sequence length="433" mass="47891">MPREKPHINVVFIGHVDHGKSTTVGRLKYDLGLIPESELEKIREEAKKYGKEEFVFAYLMDRQKEERARGVTIDIAHTELETPHNYITIVDAPGHKDFVKNMITGASQADAAVLVVAADDGVQEQTQEHAVLARTFGINQIIVYINKMDKVNYDQKRFEEVKNQVLKLLKMIGYKDENIIAVIPGASFHGDNVVKKSDKMPWYNGPTLYEALDMLKPPQLPVDLPLRIPIQSALSIKGIGTVLTGRVETGKLKPGDKIIVLPSKKPNGAIGEVKSIEMHHKPLEEALPGDNIGFSVRGIEKGDVMRGDVAGHLDNPPTVAEEIVALIHVIYHPSAITVGYAPVLHVHTAHVPVRFEELRGKVNPATGQVIEENPQALRPGEAAVVKLKPLKPVVIEPFDKIPQLGRFAIRDMGRTVAIGIARQVTPKQIEIKK</sequence>
<evidence type="ECO:0000250" key="1"/>
<evidence type="ECO:0000255" key="2">
    <source>
        <dbReference type="HAMAP-Rule" id="MF_00118"/>
    </source>
</evidence>
<keyword id="KW-0963">Cytoplasm</keyword>
<keyword id="KW-0251">Elongation factor</keyword>
<keyword id="KW-0342">GTP-binding</keyword>
<keyword id="KW-0378">Hydrolase</keyword>
<keyword id="KW-0460">Magnesium</keyword>
<keyword id="KW-0479">Metal-binding</keyword>
<keyword id="KW-0547">Nucleotide-binding</keyword>
<keyword id="KW-0648">Protein biosynthesis</keyword>
<keyword id="KW-1185">Reference proteome</keyword>
<feature type="chain" id="PRO_0000337608" description="Elongation factor 1-alpha">
    <location>
        <begin position="1"/>
        <end position="433"/>
    </location>
</feature>
<feature type="domain" description="tr-type G">
    <location>
        <begin position="5"/>
        <end position="220"/>
    </location>
</feature>
<feature type="region of interest" description="G1" evidence="1">
    <location>
        <begin position="14"/>
        <end position="21"/>
    </location>
</feature>
<feature type="region of interest" description="G2" evidence="1">
    <location>
        <begin position="70"/>
        <end position="74"/>
    </location>
</feature>
<feature type="region of interest" description="G3" evidence="1">
    <location>
        <begin position="91"/>
        <end position="94"/>
    </location>
</feature>
<feature type="region of interest" description="G4" evidence="1">
    <location>
        <begin position="146"/>
        <end position="149"/>
    </location>
</feature>
<feature type="region of interest" description="G5" evidence="1">
    <location>
        <begin position="186"/>
        <end position="188"/>
    </location>
</feature>
<feature type="binding site" evidence="2">
    <location>
        <begin position="14"/>
        <end position="21"/>
    </location>
    <ligand>
        <name>GTP</name>
        <dbReference type="ChEBI" id="CHEBI:37565"/>
    </ligand>
</feature>
<feature type="binding site" evidence="2">
    <location>
        <position position="21"/>
    </location>
    <ligand>
        <name>Mg(2+)</name>
        <dbReference type="ChEBI" id="CHEBI:18420"/>
    </ligand>
</feature>
<feature type="binding site" evidence="2">
    <location>
        <begin position="91"/>
        <end position="95"/>
    </location>
    <ligand>
        <name>GTP</name>
        <dbReference type="ChEBI" id="CHEBI:37565"/>
    </ligand>
</feature>
<feature type="binding site" evidence="2">
    <location>
        <begin position="146"/>
        <end position="149"/>
    </location>
    <ligand>
        <name>GTP</name>
        <dbReference type="ChEBI" id="CHEBI:37565"/>
    </ligand>
</feature>
<name>EF1A_NANEQ</name>
<organism>
    <name type="scientific">Nanoarchaeum equitans (strain Kin4-M)</name>
    <dbReference type="NCBI Taxonomy" id="228908"/>
    <lineage>
        <taxon>Archaea</taxon>
        <taxon>Nanobdellota</taxon>
        <taxon>Candidatus Nanoarchaeia</taxon>
        <taxon>Nanoarchaeales</taxon>
        <taxon>Nanoarchaeaceae</taxon>
        <taxon>Nanoarchaeum</taxon>
    </lineage>
</organism>
<proteinExistence type="inferred from homology"/>
<gene>
    <name evidence="2" type="primary">tuf</name>
    <name type="ordered locus">NEQ082</name>
</gene>
<accession>Q74MI6</accession>
<reference key="1">
    <citation type="journal article" date="2003" name="Proc. Natl. Acad. Sci. U.S.A.">
        <title>The genome of Nanoarchaeum equitans: insights into early archaeal evolution and derived parasitism.</title>
        <authorList>
            <person name="Waters E."/>
            <person name="Hohn M.J."/>
            <person name="Ahel I."/>
            <person name="Graham D.E."/>
            <person name="Adams M.D."/>
            <person name="Barnstead M."/>
            <person name="Beeson K.Y."/>
            <person name="Bibbs L."/>
            <person name="Bolanos R."/>
            <person name="Keller M."/>
            <person name="Kretz K."/>
            <person name="Lin X."/>
            <person name="Mathur E."/>
            <person name="Ni J."/>
            <person name="Podar M."/>
            <person name="Richardson T."/>
            <person name="Sutton G.G."/>
            <person name="Simon M."/>
            <person name="Soell D."/>
            <person name="Stetter K.O."/>
            <person name="Short J.M."/>
            <person name="Noorderwier M."/>
        </authorList>
    </citation>
    <scope>NUCLEOTIDE SEQUENCE [LARGE SCALE GENOMIC DNA]</scope>
    <source>
        <strain>Kin4-M</strain>
    </source>
</reference>
<comment type="function">
    <text evidence="2">GTP hydrolase that promotes the GTP-dependent binding of aminoacyl-tRNA to the A-site of ribosomes during protein biosynthesis.</text>
</comment>
<comment type="catalytic activity">
    <reaction evidence="2">
        <text>GTP + H2O = GDP + phosphate + H(+)</text>
        <dbReference type="Rhea" id="RHEA:19669"/>
        <dbReference type="ChEBI" id="CHEBI:15377"/>
        <dbReference type="ChEBI" id="CHEBI:15378"/>
        <dbReference type="ChEBI" id="CHEBI:37565"/>
        <dbReference type="ChEBI" id="CHEBI:43474"/>
        <dbReference type="ChEBI" id="CHEBI:58189"/>
        <dbReference type="EC" id="3.6.5.3"/>
    </reaction>
    <physiologicalReaction direction="left-to-right" evidence="2">
        <dbReference type="Rhea" id="RHEA:19670"/>
    </physiologicalReaction>
</comment>
<comment type="subcellular location">
    <subcellularLocation>
        <location evidence="2">Cytoplasm</location>
    </subcellularLocation>
</comment>
<comment type="similarity">
    <text evidence="2">Belongs to the TRAFAC class translation factor GTPase superfamily. Classic translation factor GTPase family. EF-Tu/EF-1A subfamily.</text>
</comment>